<organism>
    <name type="scientific">Rickettsia peacockii (strain Rustic)</name>
    <dbReference type="NCBI Taxonomy" id="562019"/>
    <lineage>
        <taxon>Bacteria</taxon>
        <taxon>Pseudomonadati</taxon>
        <taxon>Pseudomonadota</taxon>
        <taxon>Alphaproteobacteria</taxon>
        <taxon>Rickettsiales</taxon>
        <taxon>Rickettsiaceae</taxon>
        <taxon>Rickettsieae</taxon>
        <taxon>Rickettsia</taxon>
        <taxon>spotted fever group</taxon>
    </lineage>
</organism>
<accession>C4K1Z7</accession>
<sequence length="410" mass="45417">MNPQLNNLTLPIYMDYQATTPIDPRVMEAMLPYFTTKFGNPHSRSHSFGWEAENAVEEARSMVAKLIGADTKEIIFTSGATESNNLAIKGIAKFYSNKKNHIITVVSEHKCVLDACRHLEQEGIKITYLPIKPNGIIDLETLKNAITDQTMLVSVMVVNNEIGVVQPLKEIGKICREKGVFFHSDIAQGFGKIPIDVNAFNIDLASISGHKIYGPKGIGALYVRKKPRVRVTPLINGGGQERGMRSGTLPTPLIVGLGMAAEIAYSEMEKDTKHVNYLFDRFLNNIHKRISEVYLNGDKNQRYKGNLNLSFAGVEGESMILAIKDLAVSSGSACTSASLEPSYVLRSMGIGEELAHTAIRFGIGRFTTEQEVDYAVNLICSKIDKLRALSPLWEMMQEGIDLKKIKWAVH</sequence>
<reference key="1">
    <citation type="journal article" date="2009" name="PLoS ONE">
        <title>Genome sequence of the endosymbiont Rickettsia peacockii and comparison with virulent Rickettsia rickettsii: identification of virulence factors.</title>
        <authorList>
            <person name="Felsheim R.F."/>
            <person name="Kurtti T.J."/>
            <person name="Munderloh U.G."/>
        </authorList>
    </citation>
    <scope>NUCLEOTIDE SEQUENCE [LARGE SCALE GENOMIC DNA]</scope>
    <source>
        <strain>Rustic</strain>
    </source>
</reference>
<evidence type="ECO:0000255" key="1">
    <source>
        <dbReference type="HAMAP-Rule" id="MF_00331"/>
    </source>
</evidence>
<comment type="function">
    <text evidence="1">Master enzyme that delivers sulfur to a number of partners involved in Fe-S cluster assembly, tRNA modification or cofactor biosynthesis. Catalyzes the removal of elemental sulfur atoms from cysteine to produce alanine. Functions as a sulfur delivery protein for Fe-S cluster synthesis onto IscU, an Fe-S scaffold assembly protein, as well as other S acceptor proteins.</text>
</comment>
<comment type="catalytic activity">
    <reaction evidence="1">
        <text>(sulfur carrier)-H + L-cysteine = (sulfur carrier)-SH + L-alanine</text>
        <dbReference type="Rhea" id="RHEA:43892"/>
        <dbReference type="Rhea" id="RHEA-COMP:14737"/>
        <dbReference type="Rhea" id="RHEA-COMP:14739"/>
        <dbReference type="ChEBI" id="CHEBI:29917"/>
        <dbReference type="ChEBI" id="CHEBI:35235"/>
        <dbReference type="ChEBI" id="CHEBI:57972"/>
        <dbReference type="ChEBI" id="CHEBI:64428"/>
        <dbReference type="EC" id="2.8.1.7"/>
    </reaction>
</comment>
<comment type="cofactor">
    <cofactor evidence="1">
        <name>pyridoxal 5'-phosphate</name>
        <dbReference type="ChEBI" id="CHEBI:597326"/>
    </cofactor>
</comment>
<comment type="pathway">
    <text evidence="1">Cofactor biosynthesis; iron-sulfur cluster biosynthesis.</text>
</comment>
<comment type="subunit">
    <text evidence="1">Homodimer. Forms a heterotetramer with IscU, interacts with other sulfur acceptors.</text>
</comment>
<comment type="subcellular location">
    <subcellularLocation>
        <location evidence="1">Cytoplasm</location>
    </subcellularLocation>
</comment>
<comment type="similarity">
    <text evidence="1">Belongs to the class-V pyridoxal-phosphate-dependent aminotransferase family. NifS/IscS subfamily.</text>
</comment>
<dbReference type="EC" id="2.8.1.7" evidence="1"/>
<dbReference type="EMBL" id="CP001227">
    <property type="protein sequence ID" value="ACR47595.1"/>
    <property type="molecule type" value="Genomic_DNA"/>
</dbReference>
<dbReference type="RefSeq" id="WP_012736812.1">
    <property type="nucleotide sequence ID" value="NC_012730.1"/>
</dbReference>
<dbReference type="SMR" id="C4K1Z7"/>
<dbReference type="KEGG" id="rpk:RPR_04680"/>
<dbReference type="HOGENOM" id="CLU_003433_0_2_5"/>
<dbReference type="UniPathway" id="UPA00266"/>
<dbReference type="Proteomes" id="UP000005015">
    <property type="component" value="Chromosome"/>
</dbReference>
<dbReference type="GO" id="GO:1990221">
    <property type="term" value="C:L-cysteine desulfurase complex"/>
    <property type="evidence" value="ECO:0007669"/>
    <property type="project" value="UniProtKB-ARBA"/>
</dbReference>
<dbReference type="GO" id="GO:0051537">
    <property type="term" value="F:2 iron, 2 sulfur cluster binding"/>
    <property type="evidence" value="ECO:0007669"/>
    <property type="project" value="UniProtKB-UniRule"/>
</dbReference>
<dbReference type="GO" id="GO:0031071">
    <property type="term" value="F:cysteine desulfurase activity"/>
    <property type="evidence" value="ECO:0007669"/>
    <property type="project" value="UniProtKB-UniRule"/>
</dbReference>
<dbReference type="GO" id="GO:0046872">
    <property type="term" value="F:metal ion binding"/>
    <property type="evidence" value="ECO:0007669"/>
    <property type="project" value="UniProtKB-KW"/>
</dbReference>
<dbReference type="GO" id="GO:0030170">
    <property type="term" value="F:pyridoxal phosphate binding"/>
    <property type="evidence" value="ECO:0007669"/>
    <property type="project" value="UniProtKB-UniRule"/>
</dbReference>
<dbReference type="GO" id="GO:0044571">
    <property type="term" value="P:[2Fe-2S] cluster assembly"/>
    <property type="evidence" value="ECO:0007669"/>
    <property type="project" value="UniProtKB-UniRule"/>
</dbReference>
<dbReference type="FunFam" id="3.40.640.10:FF:000003">
    <property type="entry name" value="Cysteine desulfurase IscS"/>
    <property type="match status" value="1"/>
</dbReference>
<dbReference type="FunFam" id="3.90.1150.10:FF:000002">
    <property type="entry name" value="Cysteine desulfurase IscS"/>
    <property type="match status" value="1"/>
</dbReference>
<dbReference type="Gene3D" id="3.90.1150.10">
    <property type="entry name" value="Aspartate Aminotransferase, domain 1"/>
    <property type="match status" value="1"/>
</dbReference>
<dbReference type="Gene3D" id="3.40.640.10">
    <property type="entry name" value="Type I PLP-dependent aspartate aminotransferase-like (Major domain)"/>
    <property type="match status" value="1"/>
</dbReference>
<dbReference type="HAMAP" id="MF_00331">
    <property type="entry name" value="Cys_desulf_IscS"/>
    <property type="match status" value="1"/>
</dbReference>
<dbReference type="InterPro" id="IPR000192">
    <property type="entry name" value="Aminotrans_V_dom"/>
</dbReference>
<dbReference type="InterPro" id="IPR020578">
    <property type="entry name" value="Aminotrans_V_PyrdxlP_BS"/>
</dbReference>
<dbReference type="InterPro" id="IPR010240">
    <property type="entry name" value="Cys_deSase_IscS"/>
</dbReference>
<dbReference type="InterPro" id="IPR016454">
    <property type="entry name" value="Cysteine_dSase"/>
</dbReference>
<dbReference type="InterPro" id="IPR015424">
    <property type="entry name" value="PyrdxlP-dep_Trfase"/>
</dbReference>
<dbReference type="InterPro" id="IPR015421">
    <property type="entry name" value="PyrdxlP-dep_Trfase_major"/>
</dbReference>
<dbReference type="InterPro" id="IPR015422">
    <property type="entry name" value="PyrdxlP-dep_Trfase_small"/>
</dbReference>
<dbReference type="NCBIfam" id="TIGR02006">
    <property type="entry name" value="IscS"/>
    <property type="match status" value="1"/>
</dbReference>
<dbReference type="NCBIfam" id="NF002806">
    <property type="entry name" value="PRK02948.1"/>
    <property type="match status" value="1"/>
</dbReference>
<dbReference type="NCBIfam" id="NF010611">
    <property type="entry name" value="PRK14012.1"/>
    <property type="match status" value="1"/>
</dbReference>
<dbReference type="PANTHER" id="PTHR11601:SF34">
    <property type="entry name" value="CYSTEINE DESULFURASE"/>
    <property type="match status" value="1"/>
</dbReference>
<dbReference type="PANTHER" id="PTHR11601">
    <property type="entry name" value="CYSTEINE DESULFURYLASE FAMILY MEMBER"/>
    <property type="match status" value="1"/>
</dbReference>
<dbReference type="Pfam" id="PF00266">
    <property type="entry name" value="Aminotran_5"/>
    <property type="match status" value="1"/>
</dbReference>
<dbReference type="PIRSF" id="PIRSF005572">
    <property type="entry name" value="NifS"/>
    <property type="match status" value="1"/>
</dbReference>
<dbReference type="SUPFAM" id="SSF53383">
    <property type="entry name" value="PLP-dependent transferases"/>
    <property type="match status" value="1"/>
</dbReference>
<dbReference type="PROSITE" id="PS00595">
    <property type="entry name" value="AA_TRANSFER_CLASS_5"/>
    <property type="match status" value="1"/>
</dbReference>
<proteinExistence type="inferred from homology"/>
<keyword id="KW-0001">2Fe-2S</keyword>
<keyword id="KW-0963">Cytoplasm</keyword>
<keyword id="KW-0408">Iron</keyword>
<keyword id="KW-0411">Iron-sulfur</keyword>
<keyword id="KW-0479">Metal-binding</keyword>
<keyword id="KW-0663">Pyridoxal phosphate</keyword>
<keyword id="KW-0808">Transferase</keyword>
<gene>
    <name evidence="1" type="primary">iscS</name>
    <name type="ordered locus">RPR_04680</name>
</gene>
<protein>
    <recommendedName>
        <fullName evidence="1">Cysteine desulfurase IscS</fullName>
        <ecNumber evidence="1">2.8.1.7</ecNumber>
    </recommendedName>
</protein>
<name>ISCS_RICPU</name>
<feature type="chain" id="PRO_1000205174" description="Cysteine desulfurase IscS">
    <location>
        <begin position="1"/>
        <end position="410"/>
    </location>
</feature>
<feature type="active site" description="Cysteine persulfide intermediate" evidence="1">
    <location>
        <position position="334"/>
    </location>
</feature>
<feature type="binding site" evidence="1">
    <location>
        <begin position="80"/>
        <end position="81"/>
    </location>
    <ligand>
        <name>pyridoxal 5'-phosphate</name>
        <dbReference type="ChEBI" id="CHEBI:597326"/>
    </ligand>
</feature>
<feature type="binding site" evidence="1">
    <location>
        <position position="160"/>
    </location>
    <ligand>
        <name>pyridoxal 5'-phosphate</name>
        <dbReference type="ChEBI" id="CHEBI:597326"/>
    </ligand>
</feature>
<feature type="binding site" evidence="1">
    <location>
        <position position="188"/>
    </location>
    <ligand>
        <name>pyridoxal 5'-phosphate</name>
        <dbReference type="ChEBI" id="CHEBI:597326"/>
    </ligand>
</feature>
<feature type="binding site" evidence="1">
    <location>
        <begin position="208"/>
        <end position="210"/>
    </location>
    <ligand>
        <name>pyridoxal 5'-phosphate</name>
        <dbReference type="ChEBI" id="CHEBI:597326"/>
    </ligand>
</feature>
<feature type="binding site" evidence="1">
    <location>
        <position position="248"/>
    </location>
    <ligand>
        <name>pyridoxal 5'-phosphate</name>
        <dbReference type="ChEBI" id="CHEBI:597326"/>
    </ligand>
</feature>
<feature type="binding site" description="via persulfide group" evidence="1">
    <location>
        <position position="334"/>
    </location>
    <ligand>
        <name>[2Fe-2S] cluster</name>
        <dbReference type="ChEBI" id="CHEBI:190135"/>
        <note>ligand shared with IscU</note>
    </ligand>
</feature>
<feature type="modified residue" description="N6-(pyridoxal phosphate)lysine" evidence="1">
    <location>
        <position position="211"/>
    </location>
</feature>